<keyword id="KW-1185">Reference proteome</keyword>
<keyword id="KW-0687">Ribonucleoprotein</keyword>
<keyword id="KW-0689">Ribosomal protein</keyword>
<keyword id="KW-0694">RNA-binding</keyword>
<keyword id="KW-0699">rRNA-binding</keyword>
<organism>
    <name type="scientific">Bordetella pertussis (strain Tohama I / ATCC BAA-589 / NCTC 13251)</name>
    <dbReference type="NCBI Taxonomy" id="257313"/>
    <lineage>
        <taxon>Bacteria</taxon>
        <taxon>Pseudomonadati</taxon>
        <taxon>Pseudomonadota</taxon>
        <taxon>Betaproteobacteria</taxon>
        <taxon>Burkholderiales</taxon>
        <taxon>Alcaligenaceae</taxon>
        <taxon>Bordetella</taxon>
    </lineage>
</organism>
<protein>
    <recommendedName>
        <fullName evidence="1">Small ribosomal subunit protein bS18</fullName>
    </recommendedName>
    <alternativeName>
        <fullName evidence="2">30S ribosomal protein S18</fullName>
    </alternativeName>
</protein>
<dbReference type="EMBL" id="BX640419">
    <property type="protein sequence ID" value="CAE43067.1"/>
    <property type="molecule type" value="Genomic_DNA"/>
</dbReference>
<dbReference type="RefSeq" id="NP_881394.1">
    <property type="nucleotide sequence ID" value="NC_002929.2"/>
</dbReference>
<dbReference type="RefSeq" id="WP_003813094.1">
    <property type="nucleotide sequence ID" value="NZ_CP039022.1"/>
</dbReference>
<dbReference type="SMR" id="Q7VV91"/>
<dbReference type="STRING" id="257313.BP2794"/>
<dbReference type="PaxDb" id="257313-BP2794"/>
<dbReference type="GeneID" id="93204252"/>
<dbReference type="KEGG" id="bpe:BP2794"/>
<dbReference type="PATRIC" id="fig|257313.5.peg.3014"/>
<dbReference type="eggNOG" id="COG0238">
    <property type="taxonomic scope" value="Bacteria"/>
</dbReference>
<dbReference type="HOGENOM" id="CLU_148710_0_3_4"/>
<dbReference type="Proteomes" id="UP000002676">
    <property type="component" value="Chromosome"/>
</dbReference>
<dbReference type="GO" id="GO:0022627">
    <property type="term" value="C:cytosolic small ribosomal subunit"/>
    <property type="evidence" value="ECO:0007669"/>
    <property type="project" value="TreeGrafter"/>
</dbReference>
<dbReference type="GO" id="GO:0070181">
    <property type="term" value="F:small ribosomal subunit rRNA binding"/>
    <property type="evidence" value="ECO:0007669"/>
    <property type="project" value="TreeGrafter"/>
</dbReference>
<dbReference type="GO" id="GO:0003735">
    <property type="term" value="F:structural constituent of ribosome"/>
    <property type="evidence" value="ECO:0007669"/>
    <property type="project" value="InterPro"/>
</dbReference>
<dbReference type="GO" id="GO:0006412">
    <property type="term" value="P:translation"/>
    <property type="evidence" value="ECO:0007669"/>
    <property type="project" value="UniProtKB-UniRule"/>
</dbReference>
<dbReference type="Gene3D" id="4.10.640.10">
    <property type="entry name" value="Ribosomal protein S18"/>
    <property type="match status" value="1"/>
</dbReference>
<dbReference type="HAMAP" id="MF_00270">
    <property type="entry name" value="Ribosomal_bS18"/>
    <property type="match status" value="1"/>
</dbReference>
<dbReference type="InterPro" id="IPR001648">
    <property type="entry name" value="Ribosomal_bS18"/>
</dbReference>
<dbReference type="InterPro" id="IPR018275">
    <property type="entry name" value="Ribosomal_bS18_CS"/>
</dbReference>
<dbReference type="InterPro" id="IPR036870">
    <property type="entry name" value="Ribosomal_bS18_sf"/>
</dbReference>
<dbReference type="NCBIfam" id="TIGR00165">
    <property type="entry name" value="S18"/>
    <property type="match status" value="1"/>
</dbReference>
<dbReference type="PANTHER" id="PTHR13479">
    <property type="entry name" value="30S RIBOSOMAL PROTEIN S18"/>
    <property type="match status" value="1"/>
</dbReference>
<dbReference type="PANTHER" id="PTHR13479:SF40">
    <property type="entry name" value="SMALL RIBOSOMAL SUBUNIT PROTEIN BS18M"/>
    <property type="match status" value="1"/>
</dbReference>
<dbReference type="Pfam" id="PF01084">
    <property type="entry name" value="Ribosomal_S18"/>
    <property type="match status" value="1"/>
</dbReference>
<dbReference type="PRINTS" id="PR00974">
    <property type="entry name" value="RIBOSOMALS18"/>
</dbReference>
<dbReference type="SUPFAM" id="SSF46911">
    <property type="entry name" value="Ribosomal protein S18"/>
    <property type="match status" value="1"/>
</dbReference>
<dbReference type="PROSITE" id="PS00057">
    <property type="entry name" value="RIBOSOMAL_S18"/>
    <property type="match status" value="1"/>
</dbReference>
<reference key="1">
    <citation type="journal article" date="2003" name="Nat. Genet.">
        <title>Comparative analysis of the genome sequences of Bordetella pertussis, Bordetella parapertussis and Bordetella bronchiseptica.</title>
        <authorList>
            <person name="Parkhill J."/>
            <person name="Sebaihia M."/>
            <person name="Preston A."/>
            <person name="Murphy L.D."/>
            <person name="Thomson N.R."/>
            <person name="Harris D.E."/>
            <person name="Holden M.T.G."/>
            <person name="Churcher C.M."/>
            <person name="Bentley S.D."/>
            <person name="Mungall K.L."/>
            <person name="Cerdeno-Tarraga A.-M."/>
            <person name="Temple L."/>
            <person name="James K.D."/>
            <person name="Harris B."/>
            <person name="Quail M.A."/>
            <person name="Achtman M."/>
            <person name="Atkin R."/>
            <person name="Baker S."/>
            <person name="Basham D."/>
            <person name="Bason N."/>
            <person name="Cherevach I."/>
            <person name="Chillingworth T."/>
            <person name="Collins M."/>
            <person name="Cronin A."/>
            <person name="Davis P."/>
            <person name="Doggett J."/>
            <person name="Feltwell T."/>
            <person name="Goble A."/>
            <person name="Hamlin N."/>
            <person name="Hauser H."/>
            <person name="Holroyd S."/>
            <person name="Jagels K."/>
            <person name="Leather S."/>
            <person name="Moule S."/>
            <person name="Norberczak H."/>
            <person name="O'Neil S."/>
            <person name="Ormond D."/>
            <person name="Price C."/>
            <person name="Rabbinowitsch E."/>
            <person name="Rutter S."/>
            <person name="Sanders M."/>
            <person name="Saunders D."/>
            <person name="Seeger K."/>
            <person name="Sharp S."/>
            <person name="Simmonds M."/>
            <person name="Skelton J."/>
            <person name="Squares R."/>
            <person name="Squares S."/>
            <person name="Stevens K."/>
            <person name="Unwin L."/>
            <person name="Whitehead S."/>
            <person name="Barrell B.G."/>
            <person name="Maskell D.J."/>
        </authorList>
    </citation>
    <scope>NUCLEOTIDE SEQUENCE [LARGE SCALE GENOMIC DNA]</scope>
    <source>
        <strain>Tohama I / ATCC BAA-589 / NCTC 13251</strain>
    </source>
</reference>
<name>RS18_BORPE</name>
<gene>
    <name evidence="1" type="primary">rpsR</name>
    <name type="ordered locus">BP2794</name>
</gene>
<comment type="function">
    <text evidence="1">Binds as a heterodimer with protein bS6 to the central domain of the 16S rRNA, where it helps stabilize the platform of the 30S subunit.</text>
</comment>
<comment type="subunit">
    <text evidence="1">Part of the 30S ribosomal subunit. Forms a tight heterodimer with protein bS6.</text>
</comment>
<comment type="similarity">
    <text evidence="1">Belongs to the bacterial ribosomal protein bS18 family.</text>
</comment>
<feature type="chain" id="PRO_0000111126" description="Small ribosomal subunit protein bS18">
    <location>
        <begin position="1"/>
        <end position="90"/>
    </location>
</feature>
<evidence type="ECO:0000255" key="1">
    <source>
        <dbReference type="HAMAP-Rule" id="MF_00270"/>
    </source>
</evidence>
<evidence type="ECO:0000305" key="2"/>
<proteinExistence type="inferred from homology"/>
<sequence length="90" mass="10711">MAFFGKRKEKRKFTQQNPLFKRRKFCRFTAAGVEEIDYKDLDTLRDFVQENGKIIPARLTGTRAIYQRQLDTAIKRARFLALLPYTDNHK</sequence>
<accession>Q7VV91</accession>